<proteinExistence type="inferred from homology"/>
<gene>
    <name evidence="1" type="primary">rlmN</name>
    <name type="ordered locus">Bphy_1422</name>
</gene>
<sequence>MTSSPTVNLLDLDAAGLVAYCDSLGEKPFRAKQLQRWIHQYNAADFDGMTDLAKSLREKLKGRASITMPPVVSDHISSDGTRKWLVDVGNGNAVETVYIPEETRGTLCVSSQAGCAVNCRFCSTGKQGFSRNLGTGEIIGQLRMAEFALRASRGTAGGRATGGDGKGERVVTNVVMMGMGEPLLNYDAVVPAMRLMLDDNAYGLSRRRVTLSTSGVVPMMDRLGADLPVALAVSLHAPNDALRDELVPLNKKYPLRELMAACQRYLKVAPRDFITFEYCMLDGVNDSEAHARELLAVTRDVPCKFNLIPFNPFPESGLLRSKSEQIKRFAQVLMDAGVVTTVRKTRGDDIDAACGQLAGAVKDRTRLAERTGKGKVIEVRAV</sequence>
<feature type="chain" id="PRO_0000350079" description="Dual-specificity RNA methyltransferase RlmN">
    <location>
        <begin position="1"/>
        <end position="382"/>
    </location>
</feature>
<feature type="domain" description="Radical SAM core" evidence="2">
    <location>
        <begin position="101"/>
        <end position="349"/>
    </location>
</feature>
<feature type="active site" description="Proton acceptor" evidence="1">
    <location>
        <position position="95"/>
    </location>
</feature>
<feature type="active site" description="S-methylcysteine intermediate" evidence="1">
    <location>
        <position position="354"/>
    </location>
</feature>
<feature type="binding site" evidence="1">
    <location>
        <position position="115"/>
    </location>
    <ligand>
        <name>[4Fe-4S] cluster</name>
        <dbReference type="ChEBI" id="CHEBI:49883"/>
        <note>4Fe-4S-S-AdoMet</note>
    </ligand>
</feature>
<feature type="binding site" evidence="1">
    <location>
        <position position="119"/>
    </location>
    <ligand>
        <name>[4Fe-4S] cluster</name>
        <dbReference type="ChEBI" id="CHEBI:49883"/>
        <note>4Fe-4S-S-AdoMet</note>
    </ligand>
</feature>
<feature type="binding site" evidence="1">
    <location>
        <position position="122"/>
    </location>
    <ligand>
        <name>[4Fe-4S] cluster</name>
        <dbReference type="ChEBI" id="CHEBI:49883"/>
        <note>4Fe-4S-S-AdoMet</note>
    </ligand>
</feature>
<feature type="binding site" evidence="1">
    <location>
        <begin position="180"/>
        <end position="181"/>
    </location>
    <ligand>
        <name>S-adenosyl-L-methionine</name>
        <dbReference type="ChEBI" id="CHEBI:59789"/>
    </ligand>
</feature>
<feature type="binding site" evidence="1">
    <location>
        <position position="212"/>
    </location>
    <ligand>
        <name>S-adenosyl-L-methionine</name>
        <dbReference type="ChEBI" id="CHEBI:59789"/>
    </ligand>
</feature>
<feature type="binding site" evidence="1">
    <location>
        <begin position="234"/>
        <end position="236"/>
    </location>
    <ligand>
        <name>S-adenosyl-L-methionine</name>
        <dbReference type="ChEBI" id="CHEBI:59789"/>
    </ligand>
</feature>
<feature type="binding site" evidence="1">
    <location>
        <position position="311"/>
    </location>
    <ligand>
        <name>S-adenosyl-L-methionine</name>
        <dbReference type="ChEBI" id="CHEBI:59789"/>
    </ligand>
</feature>
<feature type="disulfide bond" description="(transient)" evidence="1">
    <location>
        <begin position="108"/>
        <end position="354"/>
    </location>
</feature>
<evidence type="ECO:0000255" key="1">
    <source>
        <dbReference type="HAMAP-Rule" id="MF_01849"/>
    </source>
</evidence>
<evidence type="ECO:0000255" key="2">
    <source>
        <dbReference type="PROSITE-ProRule" id="PRU01266"/>
    </source>
</evidence>
<organism>
    <name type="scientific">Paraburkholderia phymatum (strain DSM 17167 / CIP 108236 / LMG 21445 / STM815)</name>
    <name type="common">Burkholderia phymatum</name>
    <dbReference type="NCBI Taxonomy" id="391038"/>
    <lineage>
        <taxon>Bacteria</taxon>
        <taxon>Pseudomonadati</taxon>
        <taxon>Pseudomonadota</taxon>
        <taxon>Betaproteobacteria</taxon>
        <taxon>Burkholderiales</taxon>
        <taxon>Burkholderiaceae</taxon>
        <taxon>Paraburkholderia</taxon>
    </lineage>
</organism>
<comment type="function">
    <text evidence="1">Specifically methylates position 2 of adenine 2503 in 23S rRNA and position 2 of adenine 37 in tRNAs. m2A2503 modification seems to play a crucial role in the proofreading step occurring at the peptidyl transferase center and thus would serve to optimize ribosomal fidelity.</text>
</comment>
<comment type="catalytic activity">
    <reaction evidence="1">
        <text>adenosine(2503) in 23S rRNA + 2 reduced [2Fe-2S]-[ferredoxin] + 2 S-adenosyl-L-methionine = 2-methyladenosine(2503) in 23S rRNA + 5'-deoxyadenosine + L-methionine + 2 oxidized [2Fe-2S]-[ferredoxin] + S-adenosyl-L-homocysteine</text>
        <dbReference type="Rhea" id="RHEA:42916"/>
        <dbReference type="Rhea" id="RHEA-COMP:10000"/>
        <dbReference type="Rhea" id="RHEA-COMP:10001"/>
        <dbReference type="Rhea" id="RHEA-COMP:10152"/>
        <dbReference type="Rhea" id="RHEA-COMP:10282"/>
        <dbReference type="ChEBI" id="CHEBI:17319"/>
        <dbReference type="ChEBI" id="CHEBI:33737"/>
        <dbReference type="ChEBI" id="CHEBI:33738"/>
        <dbReference type="ChEBI" id="CHEBI:57844"/>
        <dbReference type="ChEBI" id="CHEBI:57856"/>
        <dbReference type="ChEBI" id="CHEBI:59789"/>
        <dbReference type="ChEBI" id="CHEBI:74411"/>
        <dbReference type="ChEBI" id="CHEBI:74497"/>
        <dbReference type="EC" id="2.1.1.192"/>
    </reaction>
</comment>
<comment type="catalytic activity">
    <reaction evidence="1">
        <text>adenosine(37) in tRNA + 2 reduced [2Fe-2S]-[ferredoxin] + 2 S-adenosyl-L-methionine = 2-methyladenosine(37) in tRNA + 5'-deoxyadenosine + L-methionine + 2 oxidized [2Fe-2S]-[ferredoxin] + S-adenosyl-L-homocysteine</text>
        <dbReference type="Rhea" id="RHEA:43332"/>
        <dbReference type="Rhea" id="RHEA-COMP:10000"/>
        <dbReference type="Rhea" id="RHEA-COMP:10001"/>
        <dbReference type="Rhea" id="RHEA-COMP:10162"/>
        <dbReference type="Rhea" id="RHEA-COMP:10485"/>
        <dbReference type="ChEBI" id="CHEBI:17319"/>
        <dbReference type="ChEBI" id="CHEBI:33737"/>
        <dbReference type="ChEBI" id="CHEBI:33738"/>
        <dbReference type="ChEBI" id="CHEBI:57844"/>
        <dbReference type="ChEBI" id="CHEBI:57856"/>
        <dbReference type="ChEBI" id="CHEBI:59789"/>
        <dbReference type="ChEBI" id="CHEBI:74411"/>
        <dbReference type="ChEBI" id="CHEBI:74497"/>
        <dbReference type="EC" id="2.1.1.192"/>
    </reaction>
</comment>
<comment type="cofactor">
    <cofactor evidence="1">
        <name>[4Fe-4S] cluster</name>
        <dbReference type="ChEBI" id="CHEBI:49883"/>
    </cofactor>
    <text evidence="1">Binds 1 [4Fe-4S] cluster. The cluster is coordinated with 3 cysteines and an exchangeable S-adenosyl-L-methionine.</text>
</comment>
<comment type="subcellular location">
    <subcellularLocation>
        <location evidence="1">Cytoplasm</location>
    </subcellularLocation>
</comment>
<comment type="miscellaneous">
    <text evidence="1">Reaction proceeds by a ping-pong mechanism involving intermediate methylation of a conserved cysteine residue.</text>
</comment>
<comment type="similarity">
    <text evidence="1">Belongs to the radical SAM superfamily. RlmN family.</text>
</comment>
<reference key="1">
    <citation type="journal article" date="2014" name="Stand. Genomic Sci.">
        <title>Complete genome sequence of Burkholderia phymatum STM815(T), a broad host range and efficient nitrogen-fixing symbiont of Mimosa species.</title>
        <authorList>
            <person name="Moulin L."/>
            <person name="Klonowska A."/>
            <person name="Caroline B."/>
            <person name="Booth K."/>
            <person name="Vriezen J.A."/>
            <person name="Melkonian R."/>
            <person name="James E.K."/>
            <person name="Young J.P."/>
            <person name="Bena G."/>
            <person name="Hauser L."/>
            <person name="Land M."/>
            <person name="Kyrpides N."/>
            <person name="Bruce D."/>
            <person name="Chain P."/>
            <person name="Copeland A."/>
            <person name="Pitluck S."/>
            <person name="Woyke T."/>
            <person name="Lizotte-Waniewski M."/>
            <person name="Bristow J."/>
            <person name="Riley M."/>
        </authorList>
    </citation>
    <scope>NUCLEOTIDE SEQUENCE [LARGE SCALE GENOMIC DNA]</scope>
    <source>
        <strain>DSM 17167 / CIP 108236 / LMG 21445 / STM815</strain>
    </source>
</reference>
<accession>B2JIV3</accession>
<name>RLMN_PARP8</name>
<keyword id="KW-0004">4Fe-4S</keyword>
<keyword id="KW-0963">Cytoplasm</keyword>
<keyword id="KW-1015">Disulfide bond</keyword>
<keyword id="KW-0408">Iron</keyword>
<keyword id="KW-0411">Iron-sulfur</keyword>
<keyword id="KW-0479">Metal-binding</keyword>
<keyword id="KW-0489">Methyltransferase</keyword>
<keyword id="KW-1185">Reference proteome</keyword>
<keyword id="KW-0698">rRNA processing</keyword>
<keyword id="KW-0949">S-adenosyl-L-methionine</keyword>
<keyword id="KW-0808">Transferase</keyword>
<keyword id="KW-0819">tRNA processing</keyword>
<dbReference type="EC" id="2.1.1.192" evidence="1"/>
<dbReference type="EMBL" id="CP001043">
    <property type="protein sequence ID" value="ACC70604.1"/>
    <property type="molecule type" value="Genomic_DNA"/>
</dbReference>
<dbReference type="RefSeq" id="WP_012400817.1">
    <property type="nucleotide sequence ID" value="NC_010622.1"/>
</dbReference>
<dbReference type="SMR" id="B2JIV3"/>
<dbReference type="STRING" id="391038.Bphy_1422"/>
<dbReference type="KEGG" id="bph:Bphy_1422"/>
<dbReference type="eggNOG" id="COG0820">
    <property type="taxonomic scope" value="Bacteria"/>
</dbReference>
<dbReference type="HOGENOM" id="CLU_029101_0_0_4"/>
<dbReference type="OrthoDB" id="9793973at2"/>
<dbReference type="Proteomes" id="UP000001192">
    <property type="component" value="Chromosome 1"/>
</dbReference>
<dbReference type="GO" id="GO:0005737">
    <property type="term" value="C:cytoplasm"/>
    <property type="evidence" value="ECO:0007669"/>
    <property type="project" value="UniProtKB-SubCell"/>
</dbReference>
<dbReference type="GO" id="GO:0051539">
    <property type="term" value="F:4 iron, 4 sulfur cluster binding"/>
    <property type="evidence" value="ECO:0007669"/>
    <property type="project" value="UniProtKB-UniRule"/>
</dbReference>
<dbReference type="GO" id="GO:0046872">
    <property type="term" value="F:metal ion binding"/>
    <property type="evidence" value="ECO:0007669"/>
    <property type="project" value="UniProtKB-KW"/>
</dbReference>
<dbReference type="GO" id="GO:0070040">
    <property type="term" value="F:rRNA (adenine(2503)-C2-)-methyltransferase activity"/>
    <property type="evidence" value="ECO:0007669"/>
    <property type="project" value="UniProtKB-UniRule"/>
</dbReference>
<dbReference type="GO" id="GO:0019843">
    <property type="term" value="F:rRNA binding"/>
    <property type="evidence" value="ECO:0007669"/>
    <property type="project" value="UniProtKB-UniRule"/>
</dbReference>
<dbReference type="GO" id="GO:0002935">
    <property type="term" value="F:tRNA (adenine(37)-C2)-methyltransferase activity"/>
    <property type="evidence" value="ECO:0007669"/>
    <property type="project" value="UniProtKB-UniRule"/>
</dbReference>
<dbReference type="GO" id="GO:0000049">
    <property type="term" value="F:tRNA binding"/>
    <property type="evidence" value="ECO:0007669"/>
    <property type="project" value="UniProtKB-UniRule"/>
</dbReference>
<dbReference type="GO" id="GO:0070475">
    <property type="term" value="P:rRNA base methylation"/>
    <property type="evidence" value="ECO:0007669"/>
    <property type="project" value="UniProtKB-UniRule"/>
</dbReference>
<dbReference type="GO" id="GO:0030488">
    <property type="term" value="P:tRNA methylation"/>
    <property type="evidence" value="ECO:0007669"/>
    <property type="project" value="UniProtKB-UniRule"/>
</dbReference>
<dbReference type="CDD" id="cd01335">
    <property type="entry name" value="Radical_SAM"/>
    <property type="match status" value="1"/>
</dbReference>
<dbReference type="FunFam" id="1.10.150.530:FF:000003">
    <property type="entry name" value="Dual-specificity RNA methyltransferase RlmN"/>
    <property type="match status" value="1"/>
</dbReference>
<dbReference type="FunFam" id="3.20.20.70:FF:000008">
    <property type="entry name" value="Dual-specificity RNA methyltransferase RlmN"/>
    <property type="match status" value="1"/>
</dbReference>
<dbReference type="Gene3D" id="1.10.150.530">
    <property type="match status" value="1"/>
</dbReference>
<dbReference type="Gene3D" id="3.20.20.70">
    <property type="entry name" value="Aldolase class I"/>
    <property type="match status" value="1"/>
</dbReference>
<dbReference type="HAMAP" id="MF_01849">
    <property type="entry name" value="RNA_methyltr_RlmN"/>
    <property type="match status" value="1"/>
</dbReference>
<dbReference type="InterPro" id="IPR013785">
    <property type="entry name" value="Aldolase_TIM"/>
</dbReference>
<dbReference type="InterPro" id="IPR040072">
    <property type="entry name" value="Methyltransferase_A"/>
</dbReference>
<dbReference type="InterPro" id="IPR048641">
    <property type="entry name" value="RlmN_N"/>
</dbReference>
<dbReference type="InterPro" id="IPR027492">
    <property type="entry name" value="RNA_MTrfase_RlmN"/>
</dbReference>
<dbReference type="InterPro" id="IPR004383">
    <property type="entry name" value="rRNA_lsu_MTrfase_RlmN/Cfr"/>
</dbReference>
<dbReference type="InterPro" id="IPR007197">
    <property type="entry name" value="rSAM"/>
</dbReference>
<dbReference type="NCBIfam" id="TIGR00048">
    <property type="entry name" value="rRNA_mod_RlmN"/>
    <property type="match status" value="1"/>
</dbReference>
<dbReference type="PANTHER" id="PTHR30544">
    <property type="entry name" value="23S RRNA METHYLTRANSFERASE"/>
    <property type="match status" value="1"/>
</dbReference>
<dbReference type="PANTHER" id="PTHR30544:SF5">
    <property type="entry name" value="RADICAL SAM CORE DOMAIN-CONTAINING PROTEIN"/>
    <property type="match status" value="1"/>
</dbReference>
<dbReference type="Pfam" id="PF04055">
    <property type="entry name" value="Radical_SAM"/>
    <property type="match status" value="1"/>
</dbReference>
<dbReference type="Pfam" id="PF21016">
    <property type="entry name" value="RlmN_N"/>
    <property type="match status" value="1"/>
</dbReference>
<dbReference type="PIRSF" id="PIRSF006004">
    <property type="entry name" value="CHP00048"/>
    <property type="match status" value="1"/>
</dbReference>
<dbReference type="SFLD" id="SFLDF00275">
    <property type="entry name" value="adenosine_C2_methyltransferase"/>
    <property type="match status" value="1"/>
</dbReference>
<dbReference type="SFLD" id="SFLDS00029">
    <property type="entry name" value="Radical_SAM"/>
    <property type="match status" value="1"/>
</dbReference>
<dbReference type="SUPFAM" id="SSF102114">
    <property type="entry name" value="Radical SAM enzymes"/>
    <property type="match status" value="1"/>
</dbReference>
<dbReference type="PROSITE" id="PS51918">
    <property type="entry name" value="RADICAL_SAM"/>
    <property type="match status" value="1"/>
</dbReference>
<protein>
    <recommendedName>
        <fullName evidence="1">Dual-specificity RNA methyltransferase RlmN</fullName>
        <ecNumber evidence="1">2.1.1.192</ecNumber>
    </recommendedName>
    <alternativeName>
        <fullName evidence="1">23S rRNA (adenine(2503)-C(2))-methyltransferase</fullName>
    </alternativeName>
    <alternativeName>
        <fullName evidence="1">23S rRNA m2A2503 methyltransferase</fullName>
    </alternativeName>
    <alternativeName>
        <fullName evidence="1">Ribosomal RNA large subunit methyltransferase N</fullName>
    </alternativeName>
    <alternativeName>
        <fullName evidence="1">tRNA (adenine(37)-C(2))-methyltransferase</fullName>
    </alternativeName>
    <alternativeName>
        <fullName evidence="1">tRNA m2A37 methyltransferase</fullName>
    </alternativeName>
</protein>